<proteinExistence type="inferred from homology"/>
<name>PGK_MYCBP</name>
<protein>
    <recommendedName>
        <fullName evidence="1">Phosphoglycerate kinase</fullName>
        <ecNumber evidence="1">2.7.2.3</ecNumber>
    </recommendedName>
</protein>
<evidence type="ECO:0000255" key="1">
    <source>
        <dbReference type="HAMAP-Rule" id="MF_00145"/>
    </source>
</evidence>
<reference key="1">
    <citation type="journal article" date="2007" name="Proc. Natl. Acad. Sci. U.S.A.">
        <title>Genome plasticity of BCG and impact on vaccine efficacy.</title>
        <authorList>
            <person name="Brosch R."/>
            <person name="Gordon S.V."/>
            <person name="Garnier T."/>
            <person name="Eiglmeier K."/>
            <person name="Frigui W."/>
            <person name="Valenti P."/>
            <person name="Dos Santos S."/>
            <person name="Duthoy S."/>
            <person name="Lacroix C."/>
            <person name="Garcia-Pelayo C."/>
            <person name="Inwald J.K."/>
            <person name="Golby P."/>
            <person name="Garcia J.N."/>
            <person name="Hewinson R.G."/>
            <person name="Behr M.A."/>
            <person name="Quail M.A."/>
            <person name="Churcher C."/>
            <person name="Barrell B.G."/>
            <person name="Parkhill J."/>
            <person name="Cole S.T."/>
        </authorList>
    </citation>
    <scope>NUCLEOTIDE SEQUENCE [LARGE SCALE GENOMIC DNA]</scope>
    <source>
        <strain>BCG / Pasteur 1173P2</strain>
    </source>
</reference>
<accession>A1KIM6</accession>
<gene>
    <name evidence="1" type="primary">pgk</name>
    <name type="ordered locus">BCG_1498</name>
</gene>
<dbReference type="EC" id="2.7.2.3" evidence="1"/>
<dbReference type="EMBL" id="AM408590">
    <property type="protein sequence ID" value="CAL71485.1"/>
    <property type="molecule type" value="Genomic_DNA"/>
</dbReference>
<dbReference type="RefSeq" id="WP_003900339.1">
    <property type="nucleotide sequence ID" value="NC_008769.1"/>
</dbReference>
<dbReference type="SMR" id="A1KIM6"/>
<dbReference type="KEGG" id="mbb:BCG_1498"/>
<dbReference type="HOGENOM" id="CLU_025427_0_2_11"/>
<dbReference type="UniPathway" id="UPA00109">
    <property type="reaction ID" value="UER00185"/>
</dbReference>
<dbReference type="Proteomes" id="UP000001472">
    <property type="component" value="Chromosome"/>
</dbReference>
<dbReference type="GO" id="GO:0005829">
    <property type="term" value="C:cytosol"/>
    <property type="evidence" value="ECO:0007669"/>
    <property type="project" value="TreeGrafter"/>
</dbReference>
<dbReference type="GO" id="GO:0043531">
    <property type="term" value="F:ADP binding"/>
    <property type="evidence" value="ECO:0007669"/>
    <property type="project" value="TreeGrafter"/>
</dbReference>
<dbReference type="GO" id="GO:0005524">
    <property type="term" value="F:ATP binding"/>
    <property type="evidence" value="ECO:0007669"/>
    <property type="project" value="UniProtKB-KW"/>
</dbReference>
<dbReference type="GO" id="GO:0004618">
    <property type="term" value="F:phosphoglycerate kinase activity"/>
    <property type="evidence" value="ECO:0007669"/>
    <property type="project" value="UniProtKB-UniRule"/>
</dbReference>
<dbReference type="GO" id="GO:0006094">
    <property type="term" value="P:gluconeogenesis"/>
    <property type="evidence" value="ECO:0007669"/>
    <property type="project" value="TreeGrafter"/>
</dbReference>
<dbReference type="GO" id="GO:0006096">
    <property type="term" value="P:glycolytic process"/>
    <property type="evidence" value="ECO:0007669"/>
    <property type="project" value="UniProtKB-UniRule"/>
</dbReference>
<dbReference type="CDD" id="cd00318">
    <property type="entry name" value="Phosphoglycerate_kinase"/>
    <property type="match status" value="1"/>
</dbReference>
<dbReference type="FunFam" id="3.40.50.1260:FF:000006">
    <property type="entry name" value="Phosphoglycerate kinase"/>
    <property type="match status" value="1"/>
</dbReference>
<dbReference type="FunFam" id="3.40.50.1260:FF:000031">
    <property type="entry name" value="Phosphoglycerate kinase 1"/>
    <property type="match status" value="1"/>
</dbReference>
<dbReference type="Gene3D" id="3.40.50.1260">
    <property type="entry name" value="Phosphoglycerate kinase, N-terminal domain"/>
    <property type="match status" value="2"/>
</dbReference>
<dbReference type="HAMAP" id="MF_00145">
    <property type="entry name" value="Phosphoglyc_kinase"/>
    <property type="match status" value="1"/>
</dbReference>
<dbReference type="InterPro" id="IPR001576">
    <property type="entry name" value="Phosphoglycerate_kinase"/>
</dbReference>
<dbReference type="InterPro" id="IPR015911">
    <property type="entry name" value="Phosphoglycerate_kinase_CS"/>
</dbReference>
<dbReference type="InterPro" id="IPR015824">
    <property type="entry name" value="Phosphoglycerate_kinase_N"/>
</dbReference>
<dbReference type="InterPro" id="IPR036043">
    <property type="entry name" value="Phosphoglycerate_kinase_sf"/>
</dbReference>
<dbReference type="PANTHER" id="PTHR11406">
    <property type="entry name" value="PHOSPHOGLYCERATE KINASE"/>
    <property type="match status" value="1"/>
</dbReference>
<dbReference type="PANTHER" id="PTHR11406:SF23">
    <property type="entry name" value="PHOSPHOGLYCERATE KINASE 1, CHLOROPLASTIC-RELATED"/>
    <property type="match status" value="1"/>
</dbReference>
<dbReference type="Pfam" id="PF00162">
    <property type="entry name" value="PGK"/>
    <property type="match status" value="1"/>
</dbReference>
<dbReference type="PIRSF" id="PIRSF000724">
    <property type="entry name" value="Pgk"/>
    <property type="match status" value="1"/>
</dbReference>
<dbReference type="PRINTS" id="PR00477">
    <property type="entry name" value="PHGLYCKINASE"/>
</dbReference>
<dbReference type="SUPFAM" id="SSF53748">
    <property type="entry name" value="Phosphoglycerate kinase"/>
    <property type="match status" value="1"/>
</dbReference>
<dbReference type="PROSITE" id="PS00111">
    <property type="entry name" value="PGLYCERATE_KINASE"/>
    <property type="match status" value="1"/>
</dbReference>
<organism>
    <name type="scientific">Mycobacterium bovis (strain BCG / Pasteur 1173P2)</name>
    <dbReference type="NCBI Taxonomy" id="410289"/>
    <lineage>
        <taxon>Bacteria</taxon>
        <taxon>Bacillati</taxon>
        <taxon>Actinomycetota</taxon>
        <taxon>Actinomycetes</taxon>
        <taxon>Mycobacteriales</taxon>
        <taxon>Mycobacteriaceae</taxon>
        <taxon>Mycobacterium</taxon>
        <taxon>Mycobacterium tuberculosis complex</taxon>
    </lineage>
</organism>
<comment type="catalytic activity">
    <reaction evidence="1">
        <text>(2R)-3-phosphoglycerate + ATP = (2R)-3-phospho-glyceroyl phosphate + ADP</text>
        <dbReference type="Rhea" id="RHEA:14801"/>
        <dbReference type="ChEBI" id="CHEBI:30616"/>
        <dbReference type="ChEBI" id="CHEBI:57604"/>
        <dbReference type="ChEBI" id="CHEBI:58272"/>
        <dbReference type="ChEBI" id="CHEBI:456216"/>
        <dbReference type="EC" id="2.7.2.3"/>
    </reaction>
</comment>
<comment type="pathway">
    <text evidence="1">Carbohydrate degradation; glycolysis; pyruvate from D-glyceraldehyde 3-phosphate: step 2/5.</text>
</comment>
<comment type="subunit">
    <text evidence="1">Monomer.</text>
</comment>
<comment type="subcellular location">
    <subcellularLocation>
        <location evidence="1">Cytoplasm</location>
    </subcellularLocation>
</comment>
<comment type="similarity">
    <text evidence="1">Belongs to the phosphoglycerate kinase family.</text>
</comment>
<sequence length="412" mass="42512">MSVANLKDLLAEGVSGRGVLVRSDLNVPLDEDGTITDAGRIIASAPTLKALLDADAKVVVAAHLGRPKDGPDPTLSLAPVAVALGEQLGRHVQLAGDVVGADALARAEGLTGGDILLLENIRFDKRETSKNDDDRRALAKQLVELVGTGGVFVSDGFGVVHRKQASVYDIATLLPHYAGTLVADEMRVLEQLTSSTQRPYAVVLGGSKVSDKLGVIESLATKADSIVIGGGMCFTFLAAQGFSVGTSLLEDDMIEVCRGLLETYHDVLRLPVDLVVTEKFAADSPPQTVDVGAVPNGLMGLDIGPGSIKRFSTLLSNAGTIFWNGPMGVFEFPAYAAGTRGVAEAIVAATGKGAFSVVGGGDSAAAVRAMNIPEGAFSHISTGGGASLEYLEGKTLPGIEVLSREQPTGGVL</sequence>
<keyword id="KW-0067">ATP-binding</keyword>
<keyword id="KW-0963">Cytoplasm</keyword>
<keyword id="KW-0324">Glycolysis</keyword>
<keyword id="KW-0418">Kinase</keyword>
<keyword id="KW-0547">Nucleotide-binding</keyword>
<keyword id="KW-0808">Transferase</keyword>
<feature type="chain" id="PRO_1000009630" description="Phosphoglycerate kinase">
    <location>
        <begin position="1"/>
        <end position="412"/>
    </location>
</feature>
<feature type="binding site" evidence="1">
    <location>
        <begin position="24"/>
        <end position="26"/>
    </location>
    <ligand>
        <name>substrate</name>
    </ligand>
</feature>
<feature type="binding site" evidence="1">
    <location>
        <position position="40"/>
    </location>
    <ligand>
        <name>substrate</name>
    </ligand>
</feature>
<feature type="binding site" evidence="1">
    <location>
        <begin position="63"/>
        <end position="66"/>
    </location>
    <ligand>
        <name>substrate</name>
    </ligand>
</feature>
<feature type="binding site" evidence="1">
    <location>
        <position position="122"/>
    </location>
    <ligand>
        <name>substrate</name>
    </ligand>
</feature>
<feature type="binding site" evidence="1">
    <location>
        <position position="162"/>
    </location>
    <ligand>
        <name>substrate</name>
    </ligand>
</feature>
<feature type="binding site" evidence="1">
    <location>
        <position position="212"/>
    </location>
    <ligand>
        <name>ATP</name>
        <dbReference type="ChEBI" id="CHEBI:30616"/>
    </ligand>
</feature>
<feature type="binding site" evidence="1">
    <location>
        <position position="300"/>
    </location>
    <ligand>
        <name>ATP</name>
        <dbReference type="ChEBI" id="CHEBI:30616"/>
    </ligand>
</feature>
<feature type="binding site" evidence="1">
    <location>
        <position position="331"/>
    </location>
    <ligand>
        <name>ATP</name>
        <dbReference type="ChEBI" id="CHEBI:30616"/>
    </ligand>
</feature>
<feature type="binding site" evidence="1">
    <location>
        <begin position="360"/>
        <end position="363"/>
    </location>
    <ligand>
        <name>ATP</name>
        <dbReference type="ChEBI" id="CHEBI:30616"/>
    </ligand>
</feature>